<reference key="1">
    <citation type="journal article" date="2008" name="J. Bacteriol.">
        <title>Genome sequence of Staphylococcus aureus strain Newman and comparative analysis of staphylococcal genomes: polymorphism and evolution of two major pathogenicity islands.</title>
        <authorList>
            <person name="Baba T."/>
            <person name="Bae T."/>
            <person name="Schneewind O."/>
            <person name="Takeuchi F."/>
            <person name="Hiramatsu K."/>
        </authorList>
    </citation>
    <scope>NUCLEOTIDE SEQUENCE [LARGE SCALE GENOMIC DNA]</scope>
    <source>
        <strain>Newman</strain>
    </source>
</reference>
<protein>
    <recommendedName>
        <fullName evidence="1">Segregation and condensation protein B</fullName>
    </recommendedName>
</protein>
<gene>
    <name evidence="1" type="primary">scpB</name>
    <name type="ordered locus">NWMN_1402</name>
</gene>
<evidence type="ECO:0000255" key="1">
    <source>
        <dbReference type="HAMAP-Rule" id="MF_01804"/>
    </source>
</evidence>
<sequence length="180" mass="20236">MDNHGILESLLFTAGDEGLDEKQLLEILDMSKDQLVELIENYSSHGLMIQRFGMTYVLTTKKEAATYIEQLIEQKSQMKLSQAAMEVLSIIAYNQPLSRSDIELIRSINSDGAVKTLIAKGLVEAKVVNEQRSQQLITTDLFLNVFGISNIEDLPTTEEDDEEMDAFFSNLVNQKGENND</sequence>
<organism>
    <name type="scientific">Staphylococcus aureus (strain Newman)</name>
    <dbReference type="NCBI Taxonomy" id="426430"/>
    <lineage>
        <taxon>Bacteria</taxon>
        <taxon>Bacillati</taxon>
        <taxon>Bacillota</taxon>
        <taxon>Bacilli</taxon>
        <taxon>Bacillales</taxon>
        <taxon>Staphylococcaceae</taxon>
        <taxon>Staphylococcus</taxon>
    </lineage>
</organism>
<feature type="chain" id="PRO_1000073663" description="Segregation and condensation protein B">
    <location>
        <begin position="1"/>
        <end position="180"/>
    </location>
</feature>
<accession>A6QH42</accession>
<proteinExistence type="inferred from homology"/>
<name>SCPB_STAAE</name>
<comment type="function">
    <text evidence="1">Participates in chromosomal partition during cell division. May act via the formation of a condensin-like complex containing Smc and ScpA that pull DNA away from mid-cell into both cell halves.</text>
</comment>
<comment type="subunit">
    <text evidence="1">Homodimer. Homodimerization may be required to stabilize the binding of ScpA to the Smc head domains. Component of a cohesin-like complex composed of ScpA, ScpB and the Smc homodimer, in which ScpA and ScpB bind to the head domain of Smc. The presence of the three proteins is required for the association of the complex with DNA.</text>
</comment>
<comment type="subcellular location">
    <subcellularLocation>
        <location evidence="1">Cytoplasm</location>
    </subcellularLocation>
    <text evidence="1">Associated with two foci at the outer edges of the nucleoid region in young cells, and at four foci within both cell halves in older cells.</text>
</comment>
<comment type="similarity">
    <text evidence="1">Belongs to the ScpB family.</text>
</comment>
<dbReference type="EMBL" id="AP009351">
    <property type="protein sequence ID" value="BAF67674.1"/>
    <property type="molecule type" value="Genomic_DNA"/>
</dbReference>
<dbReference type="RefSeq" id="WP_000368653.1">
    <property type="nucleotide sequence ID" value="NZ_JBBIAE010000001.1"/>
</dbReference>
<dbReference type="SMR" id="A6QH42"/>
<dbReference type="KEGG" id="sae:NWMN_1402"/>
<dbReference type="HOGENOM" id="CLU_045647_5_3_9"/>
<dbReference type="Proteomes" id="UP000006386">
    <property type="component" value="Chromosome"/>
</dbReference>
<dbReference type="GO" id="GO:0005737">
    <property type="term" value="C:cytoplasm"/>
    <property type="evidence" value="ECO:0007669"/>
    <property type="project" value="UniProtKB-SubCell"/>
</dbReference>
<dbReference type="GO" id="GO:0051301">
    <property type="term" value="P:cell division"/>
    <property type="evidence" value="ECO:0007669"/>
    <property type="project" value="UniProtKB-KW"/>
</dbReference>
<dbReference type="GO" id="GO:0051304">
    <property type="term" value="P:chromosome separation"/>
    <property type="evidence" value="ECO:0007669"/>
    <property type="project" value="InterPro"/>
</dbReference>
<dbReference type="GO" id="GO:0006260">
    <property type="term" value="P:DNA replication"/>
    <property type="evidence" value="ECO:0007669"/>
    <property type="project" value="UniProtKB-UniRule"/>
</dbReference>
<dbReference type="Gene3D" id="1.10.10.10">
    <property type="entry name" value="Winged helix-like DNA-binding domain superfamily/Winged helix DNA-binding domain"/>
    <property type="match status" value="2"/>
</dbReference>
<dbReference type="HAMAP" id="MF_01804">
    <property type="entry name" value="ScpB"/>
    <property type="match status" value="1"/>
</dbReference>
<dbReference type="InterPro" id="IPR005234">
    <property type="entry name" value="ScpB_csome_segregation"/>
</dbReference>
<dbReference type="InterPro" id="IPR036388">
    <property type="entry name" value="WH-like_DNA-bd_sf"/>
</dbReference>
<dbReference type="InterPro" id="IPR036390">
    <property type="entry name" value="WH_DNA-bd_sf"/>
</dbReference>
<dbReference type="NCBIfam" id="TIGR00281">
    <property type="entry name" value="SMC-Scp complex subunit ScpB"/>
    <property type="match status" value="1"/>
</dbReference>
<dbReference type="PANTHER" id="PTHR34298">
    <property type="entry name" value="SEGREGATION AND CONDENSATION PROTEIN B"/>
    <property type="match status" value="1"/>
</dbReference>
<dbReference type="PANTHER" id="PTHR34298:SF2">
    <property type="entry name" value="SEGREGATION AND CONDENSATION PROTEIN B"/>
    <property type="match status" value="1"/>
</dbReference>
<dbReference type="Pfam" id="PF04079">
    <property type="entry name" value="SMC_ScpB"/>
    <property type="match status" value="1"/>
</dbReference>
<dbReference type="PIRSF" id="PIRSF019345">
    <property type="entry name" value="ScpB"/>
    <property type="match status" value="1"/>
</dbReference>
<dbReference type="SUPFAM" id="SSF46785">
    <property type="entry name" value="Winged helix' DNA-binding domain"/>
    <property type="match status" value="2"/>
</dbReference>
<keyword id="KW-0131">Cell cycle</keyword>
<keyword id="KW-0132">Cell division</keyword>
<keyword id="KW-0159">Chromosome partition</keyword>
<keyword id="KW-0963">Cytoplasm</keyword>